<sequence length="353" mass="39462">MFYWLYRHLEINILQYISVRAGISFFIAFVLTMYLMPKFIRWARAKKASQPIYELAPENHKIKAGTPTMGGVVFIFSTIIATVLTAKLNNFYIVGGILTLALFSLIGIQDDYSKISKEKNSAGLTPRMKLIFQFLCAASIAGILFLYGHSTELFTPFYKFPLFEMGVFGIVFWMFVIVGSSNAVNLTDGLDGLATVPSILAFSTLSILVYVVGHAVFANYLLFPNIQIAGELAIMGSAICGALIAFLWFNSHPAEVFMGDSGSLPLGAFMGYLAIVAKSEILLLAIGFIFVWETVSVILQVGSYKLRQKRVFLMAPIHHHFEQKGWKENKIIVRFWIIAFMSNLIALLSLKIR</sequence>
<keyword id="KW-0131">Cell cycle</keyword>
<keyword id="KW-0132">Cell division</keyword>
<keyword id="KW-0997">Cell inner membrane</keyword>
<keyword id="KW-1003">Cell membrane</keyword>
<keyword id="KW-0133">Cell shape</keyword>
<keyword id="KW-0961">Cell wall biogenesis/degradation</keyword>
<keyword id="KW-0460">Magnesium</keyword>
<keyword id="KW-0472">Membrane</keyword>
<keyword id="KW-0479">Metal-binding</keyword>
<keyword id="KW-0573">Peptidoglycan synthesis</keyword>
<keyword id="KW-1185">Reference proteome</keyword>
<keyword id="KW-0808">Transferase</keyword>
<keyword id="KW-0812">Transmembrane</keyword>
<keyword id="KW-1133">Transmembrane helix</keyword>
<proteinExistence type="inferred from homology"/>
<organism>
    <name type="scientific">Aliarcobacter butzleri (strain RM4018)</name>
    <name type="common">Arcobacter butzleri</name>
    <dbReference type="NCBI Taxonomy" id="367737"/>
    <lineage>
        <taxon>Bacteria</taxon>
        <taxon>Pseudomonadati</taxon>
        <taxon>Campylobacterota</taxon>
        <taxon>Epsilonproteobacteria</taxon>
        <taxon>Campylobacterales</taxon>
        <taxon>Arcobacteraceae</taxon>
        <taxon>Aliarcobacter</taxon>
    </lineage>
</organism>
<protein>
    <recommendedName>
        <fullName evidence="1">Phospho-N-acetylmuramoyl-pentapeptide-transferase</fullName>
        <ecNumber evidence="1">2.7.8.13</ecNumber>
    </recommendedName>
    <alternativeName>
        <fullName evidence="1">UDP-MurNAc-pentapeptide phosphotransferase</fullName>
    </alternativeName>
</protein>
<reference key="1">
    <citation type="journal article" date="2007" name="PLoS ONE">
        <title>The complete genome sequence and analysis of the Epsilonproteobacterium Arcobacter butzleri.</title>
        <authorList>
            <person name="Miller W.G."/>
            <person name="Parker C.T."/>
            <person name="Rubenfield M."/>
            <person name="Mendz G.L."/>
            <person name="Woesten M.M.S.M."/>
            <person name="Ussery D.W."/>
            <person name="Stolz J.F."/>
            <person name="Binnewies T.T."/>
            <person name="Hallin P.F."/>
            <person name="Wang G."/>
            <person name="Malek J.A."/>
            <person name="Rogosin A."/>
            <person name="Stanker L.H."/>
            <person name="Mandrell R.E."/>
        </authorList>
    </citation>
    <scope>NUCLEOTIDE SEQUENCE [LARGE SCALE GENOMIC DNA]</scope>
    <source>
        <strain>RM4018</strain>
    </source>
</reference>
<dbReference type="EC" id="2.7.8.13" evidence="1"/>
<dbReference type="EMBL" id="CP000361">
    <property type="protein sequence ID" value="ABV68127.1"/>
    <property type="molecule type" value="Genomic_DNA"/>
</dbReference>
<dbReference type="RefSeq" id="WP_004511264.1">
    <property type="nucleotide sequence ID" value="NC_009850.1"/>
</dbReference>
<dbReference type="SMR" id="A8EW04"/>
<dbReference type="STRING" id="367737.Abu_1899"/>
<dbReference type="GeneID" id="24304112"/>
<dbReference type="KEGG" id="abu:Abu_1899"/>
<dbReference type="eggNOG" id="COG0472">
    <property type="taxonomic scope" value="Bacteria"/>
</dbReference>
<dbReference type="HOGENOM" id="CLU_023982_0_0_7"/>
<dbReference type="UniPathway" id="UPA00219"/>
<dbReference type="Proteomes" id="UP000001136">
    <property type="component" value="Chromosome"/>
</dbReference>
<dbReference type="GO" id="GO:0005886">
    <property type="term" value="C:plasma membrane"/>
    <property type="evidence" value="ECO:0007669"/>
    <property type="project" value="UniProtKB-SubCell"/>
</dbReference>
<dbReference type="GO" id="GO:0046872">
    <property type="term" value="F:metal ion binding"/>
    <property type="evidence" value="ECO:0007669"/>
    <property type="project" value="UniProtKB-KW"/>
</dbReference>
<dbReference type="GO" id="GO:0008963">
    <property type="term" value="F:phospho-N-acetylmuramoyl-pentapeptide-transferase activity"/>
    <property type="evidence" value="ECO:0007669"/>
    <property type="project" value="UniProtKB-UniRule"/>
</dbReference>
<dbReference type="GO" id="GO:0051992">
    <property type="term" value="F:UDP-N-acetylmuramoyl-L-alanyl-D-glutamyl-meso-2,6-diaminopimelyl-D-alanyl-D-alanine:undecaprenyl-phosphate transferase activity"/>
    <property type="evidence" value="ECO:0007669"/>
    <property type="project" value="RHEA"/>
</dbReference>
<dbReference type="GO" id="GO:0051301">
    <property type="term" value="P:cell division"/>
    <property type="evidence" value="ECO:0007669"/>
    <property type="project" value="UniProtKB-KW"/>
</dbReference>
<dbReference type="GO" id="GO:0071555">
    <property type="term" value="P:cell wall organization"/>
    <property type="evidence" value="ECO:0007669"/>
    <property type="project" value="UniProtKB-KW"/>
</dbReference>
<dbReference type="GO" id="GO:0009252">
    <property type="term" value="P:peptidoglycan biosynthetic process"/>
    <property type="evidence" value="ECO:0007669"/>
    <property type="project" value="UniProtKB-UniRule"/>
</dbReference>
<dbReference type="GO" id="GO:0008360">
    <property type="term" value="P:regulation of cell shape"/>
    <property type="evidence" value="ECO:0007669"/>
    <property type="project" value="UniProtKB-KW"/>
</dbReference>
<dbReference type="CDD" id="cd06852">
    <property type="entry name" value="GT_MraY"/>
    <property type="match status" value="1"/>
</dbReference>
<dbReference type="HAMAP" id="MF_00038">
    <property type="entry name" value="MraY"/>
    <property type="match status" value="1"/>
</dbReference>
<dbReference type="InterPro" id="IPR000715">
    <property type="entry name" value="Glycosyl_transferase_4"/>
</dbReference>
<dbReference type="InterPro" id="IPR003524">
    <property type="entry name" value="PNAcMuramoyl-5peptid_Trfase"/>
</dbReference>
<dbReference type="InterPro" id="IPR018480">
    <property type="entry name" value="PNAcMuramoyl-5peptid_Trfase_CS"/>
</dbReference>
<dbReference type="NCBIfam" id="TIGR00445">
    <property type="entry name" value="mraY"/>
    <property type="match status" value="1"/>
</dbReference>
<dbReference type="PANTHER" id="PTHR22926">
    <property type="entry name" value="PHOSPHO-N-ACETYLMURAMOYL-PENTAPEPTIDE-TRANSFERASE"/>
    <property type="match status" value="1"/>
</dbReference>
<dbReference type="PANTHER" id="PTHR22926:SF5">
    <property type="entry name" value="PHOSPHO-N-ACETYLMURAMOYL-PENTAPEPTIDE-TRANSFERASE HOMOLOG"/>
    <property type="match status" value="1"/>
</dbReference>
<dbReference type="Pfam" id="PF00953">
    <property type="entry name" value="Glycos_transf_4"/>
    <property type="match status" value="1"/>
</dbReference>
<dbReference type="Pfam" id="PF10555">
    <property type="entry name" value="MraY_sig1"/>
    <property type="match status" value="1"/>
</dbReference>
<dbReference type="PROSITE" id="PS01347">
    <property type="entry name" value="MRAY_1"/>
    <property type="match status" value="1"/>
</dbReference>
<dbReference type="PROSITE" id="PS01348">
    <property type="entry name" value="MRAY_2"/>
    <property type="match status" value="1"/>
</dbReference>
<feature type="chain" id="PRO_1000057273" description="Phospho-N-acetylmuramoyl-pentapeptide-transferase">
    <location>
        <begin position="1"/>
        <end position="353"/>
    </location>
</feature>
<feature type="transmembrane region" description="Helical" evidence="1">
    <location>
        <begin position="16"/>
        <end position="36"/>
    </location>
</feature>
<feature type="transmembrane region" description="Helical" evidence="1">
    <location>
        <begin position="64"/>
        <end position="84"/>
    </location>
</feature>
<feature type="transmembrane region" description="Helical" evidence="1">
    <location>
        <begin position="88"/>
        <end position="108"/>
    </location>
</feature>
<feature type="transmembrane region" description="Helical" evidence="1">
    <location>
        <begin position="130"/>
        <end position="150"/>
    </location>
</feature>
<feature type="transmembrane region" description="Helical" evidence="1">
    <location>
        <begin position="160"/>
        <end position="180"/>
    </location>
</feature>
<feature type="transmembrane region" description="Helical" evidence="1">
    <location>
        <begin position="198"/>
        <end position="218"/>
    </location>
</feature>
<feature type="transmembrane region" description="Helical" evidence="1">
    <location>
        <begin position="228"/>
        <end position="248"/>
    </location>
</feature>
<feature type="transmembrane region" description="Helical" evidence="1">
    <location>
        <begin position="256"/>
        <end position="276"/>
    </location>
</feature>
<feature type="transmembrane region" description="Helical" evidence="1">
    <location>
        <begin position="281"/>
        <end position="301"/>
    </location>
</feature>
<feature type="transmembrane region" description="Helical" evidence="1">
    <location>
        <begin position="330"/>
        <end position="350"/>
    </location>
</feature>
<accession>A8EW04</accession>
<gene>
    <name evidence="1" type="primary">mraY</name>
    <name type="ordered locus">Abu_1899</name>
</gene>
<evidence type="ECO:0000255" key="1">
    <source>
        <dbReference type="HAMAP-Rule" id="MF_00038"/>
    </source>
</evidence>
<comment type="function">
    <text evidence="1">Catalyzes the initial step of the lipid cycle reactions in the biosynthesis of the cell wall peptidoglycan: transfers peptidoglycan precursor phospho-MurNAc-pentapeptide from UDP-MurNAc-pentapeptide onto the lipid carrier undecaprenyl phosphate, yielding undecaprenyl-pyrophosphoryl-MurNAc-pentapeptide, known as lipid I.</text>
</comment>
<comment type="catalytic activity">
    <reaction evidence="1">
        <text>UDP-N-acetyl-alpha-D-muramoyl-L-alanyl-gamma-D-glutamyl-meso-2,6-diaminopimeloyl-D-alanyl-D-alanine + di-trans,octa-cis-undecaprenyl phosphate = di-trans,octa-cis-undecaprenyl diphospho-N-acetyl-alpha-D-muramoyl-L-alanyl-D-glutamyl-meso-2,6-diaminopimeloyl-D-alanyl-D-alanine + UMP</text>
        <dbReference type="Rhea" id="RHEA:28386"/>
        <dbReference type="ChEBI" id="CHEBI:57865"/>
        <dbReference type="ChEBI" id="CHEBI:60392"/>
        <dbReference type="ChEBI" id="CHEBI:61386"/>
        <dbReference type="ChEBI" id="CHEBI:61387"/>
        <dbReference type="EC" id="2.7.8.13"/>
    </reaction>
</comment>
<comment type="cofactor">
    <cofactor evidence="1">
        <name>Mg(2+)</name>
        <dbReference type="ChEBI" id="CHEBI:18420"/>
    </cofactor>
</comment>
<comment type="pathway">
    <text evidence="1">Cell wall biogenesis; peptidoglycan biosynthesis.</text>
</comment>
<comment type="subcellular location">
    <subcellularLocation>
        <location evidence="1">Cell inner membrane</location>
        <topology evidence="1">Multi-pass membrane protein</topology>
    </subcellularLocation>
</comment>
<comment type="similarity">
    <text evidence="1">Belongs to the glycosyltransferase 4 family. MraY subfamily.</text>
</comment>
<name>MRAY_ALIB4</name>